<protein>
    <recommendedName>
        <fullName evidence="1">Inorganic pyrophosphatase</fullName>
        <ecNumber evidence="1">3.6.1.1</ecNumber>
    </recommendedName>
    <alternativeName>
        <fullName evidence="1">Pyrophosphate phospho-hydrolase</fullName>
        <shortName evidence="1">PPase</shortName>
    </alternativeName>
</protein>
<reference key="1">
    <citation type="journal article" date="2003" name="Proc. Natl. Acad. Sci. U.S.A.">
        <title>The genome of Nanoarchaeum equitans: insights into early archaeal evolution and derived parasitism.</title>
        <authorList>
            <person name="Waters E."/>
            <person name="Hohn M.J."/>
            <person name="Ahel I."/>
            <person name="Graham D.E."/>
            <person name="Adams M.D."/>
            <person name="Barnstead M."/>
            <person name="Beeson K.Y."/>
            <person name="Bibbs L."/>
            <person name="Bolanos R."/>
            <person name="Keller M."/>
            <person name="Kretz K."/>
            <person name="Lin X."/>
            <person name="Mathur E."/>
            <person name="Ni J."/>
            <person name="Podar M."/>
            <person name="Richardson T."/>
            <person name="Sutton G.G."/>
            <person name="Simon M."/>
            <person name="Soell D."/>
            <person name="Stetter K.O."/>
            <person name="Short J.M."/>
            <person name="Noorderwier M."/>
        </authorList>
    </citation>
    <scope>NUCLEOTIDE SEQUENCE [LARGE SCALE GENOMIC DNA]</scope>
    <source>
        <strain>Kin4-M</strain>
    </source>
</reference>
<keyword id="KW-0963">Cytoplasm</keyword>
<keyword id="KW-0378">Hydrolase</keyword>
<keyword id="KW-0460">Magnesium</keyword>
<keyword id="KW-0479">Metal-binding</keyword>
<keyword id="KW-1185">Reference proteome</keyword>
<gene>
    <name evidence="1" type="primary">ppa</name>
    <name type="ordered locus">NEQ461</name>
</gene>
<comment type="function">
    <text evidence="1">Catalyzes the hydrolysis of inorganic pyrophosphate (PPi) forming two phosphate ions.</text>
</comment>
<comment type="catalytic activity">
    <reaction evidence="1">
        <text>diphosphate + H2O = 2 phosphate + H(+)</text>
        <dbReference type="Rhea" id="RHEA:24576"/>
        <dbReference type="ChEBI" id="CHEBI:15377"/>
        <dbReference type="ChEBI" id="CHEBI:15378"/>
        <dbReference type="ChEBI" id="CHEBI:33019"/>
        <dbReference type="ChEBI" id="CHEBI:43474"/>
        <dbReference type="EC" id="3.6.1.1"/>
    </reaction>
</comment>
<comment type="cofactor">
    <cofactor evidence="1">
        <name>Mg(2+)</name>
        <dbReference type="ChEBI" id="CHEBI:18420"/>
    </cofactor>
</comment>
<comment type="subunit">
    <text evidence="1">Homohexamer.</text>
</comment>
<comment type="subcellular location">
    <subcellularLocation>
        <location evidence="1">Cytoplasm</location>
    </subcellularLocation>
</comment>
<comment type="similarity">
    <text evidence="1">Belongs to the PPase family.</text>
</comment>
<accession>Q74MY6</accession>
<name>IPYR_NANEQ</name>
<dbReference type="EC" id="3.6.1.1" evidence="1"/>
<dbReference type="EMBL" id="AE017199">
    <property type="protein sequence ID" value="AAR39305.1"/>
    <property type="molecule type" value="Genomic_DNA"/>
</dbReference>
<dbReference type="SMR" id="Q74MY6"/>
<dbReference type="STRING" id="228908.NEQ461"/>
<dbReference type="EnsemblBacteria" id="AAR39305">
    <property type="protein sequence ID" value="AAR39305"/>
    <property type="gene ID" value="NEQ461"/>
</dbReference>
<dbReference type="KEGG" id="neq:NEQ461"/>
<dbReference type="PATRIC" id="fig|228908.8.peg.475"/>
<dbReference type="HOGENOM" id="CLU_073198_1_0_2"/>
<dbReference type="Proteomes" id="UP000000578">
    <property type="component" value="Chromosome"/>
</dbReference>
<dbReference type="GO" id="GO:0005737">
    <property type="term" value="C:cytoplasm"/>
    <property type="evidence" value="ECO:0007669"/>
    <property type="project" value="UniProtKB-SubCell"/>
</dbReference>
<dbReference type="GO" id="GO:0004427">
    <property type="term" value="F:inorganic diphosphate phosphatase activity"/>
    <property type="evidence" value="ECO:0007669"/>
    <property type="project" value="UniProtKB-UniRule"/>
</dbReference>
<dbReference type="GO" id="GO:0000287">
    <property type="term" value="F:magnesium ion binding"/>
    <property type="evidence" value="ECO:0007669"/>
    <property type="project" value="UniProtKB-UniRule"/>
</dbReference>
<dbReference type="GO" id="GO:0006796">
    <property type="term" value="P:phosphate-containing compound metabolic process"/>
    <property type="evidence" value="ECO:0007669"/>
    <property type="project" value="InterPro"/>
</dbReference>
<dbReference type="CDD" id="cd00412">
    <property type="entry name" value="pyrophosphatase"/>
    <property type="match status" value="1"/>
</dbReference>
<dbReference type="Gene3D" id="3.90.80.10">
    <property type="entry name" value="Inorganic pyrophosphatase"/>
    <property type="match status" value="1"/>
</dbReference>
<dbReference type="HAMAP" id="MF_00209">
    <property type="entry name" value="Inorganic_PPase"/>
    <property type="match status" value="1"/>
</dbReference>
<dbReference type="InterPro" id="IPR008162">
    <property type="entry name" value="Pyrophosphatase"/>
</dbReference>
<dbReference type="InterPro" id="IPR036649">
    <property type="entry name" value="Pyrophosphatase_sf"/>
</dbReference>
<dbReference type="NCBIfam" id="NF002317">
    <property type="entry name" value="PRK01250.1"/>
    <property type="match status" value="1"/>
</dbReference>
<dbReference type="PANTHER" id="PTHR10286">
    <property type="entry name" value="INORGANIC PYROPHOSPHATASE"/>
    <property type="match status" value="1"/>
</dbReference>
<dbReference type="Pfam" id="PF00719">
    <property type="entry name" value="Pyrophosphatase"/>
    <property type="match status" value="1"/>
</dbReference>
<dbReference type="SUPFAM" id="SSF50324">
    <property type="entry name" value="Inorganic pyrophosphatase"/>
    <property type="match status" value="1"/>
</dbReference>
<dbReference type="PROSITE" id="PS00387">
    <property type="entry name" value="PPASE"/>
    <property type="match status" value="1"/>
</dbReference>
<sequence>MEVYAFIEVPKGSNVKYEYEDGKLKVDRILYGAMFYPYNYGFIPETLEEDGDPLDVLVITEEPLVPGSYIKVKPIGVLVTEDEKGVDRKIIAVPVKKVDPIYGEIEDISELKEGIKLKIKHFFERYKELEPGKFVKVKEFLGKEEAEKIIKQAQENYKKQ</sequence>
<feature type="chain" id="PRO_0000137553" description="Inorganic pyrophosphatase">
    <location>
        <begin position="1"/>
        <end position="160"/>
    </location>
</feature>
<feature type="binding site" evidence="1">
    <location>
        <position position="16"/>
    </location>
    <ligand>
        <name>substrate</name>
    </ligand>
</feature>
<feature type="binding site" evidence="1">
    <location>
        <position position="28"/>
    </location>
    <ligand>
        <name>substrate</name>
    </ligand>
</feature>
<feature type="binding site" evidence="1">
    <location>
        <position position="40"/>
    </location>
    <ligand>
        <name>substrate</name>
    </ligand>
</feature>
<feature type="binding site" evidence="1">
    <location>
        <position position="50"/>
    </location>
    <ligand>
        <name>Mg(2+)</name>
        <dbReference type="ChEBI" id="CHEBI:18420"/>
        <label>1</label>
    </ligand>
</feature>
<feature type="binding site" evidence="1">
    <location>
        <position position="55"/>
    </location>
    <ligand>
        <name>Mg(2+)</name>
        <dbReference type="ChEBI" id="CHEBI:18420"/>
        <label>1</label>
    </ligand>
</feature>
<feature type="binding site" evidence="1">
    <location>
        <position position="55"/>
    </location>
    <ligand>
        <name>Mg(2+)</name>
        <dbReference type="ChEBI" id="CHEBI:18420"/>
        <label>2</label>
    </ligand>
</feature>
<feature type="binding site" evidence="1">
    <location>
        <position position="87"/>
    </location>
    <ligand>
        <name>Mg(2+)</name>
        <dbReference type="ChEBI" id="CHEBI:18420"/>
        <label>1</label>
    </ligand>
</feature>
<feature type="binding site" evidence="1">
    <location>
        <position position="126"/>
    </location>
    <ligand>
        <name>substrate</name>
    </ligand>
</feature>
<evidence type="ECO:0000255" key="1">
    <source>
        <dbReference type="HAMAP-Rule" id="MF_00209"/>
    </source>
</evidence>
<proteinExistence type="inferred from homology"/>
<organism>
    <name type="scientific">Nanoarchaeum equitans (strain Kin4-M)</name>
    <dbReference type="NCBI Taxonomy" id="228908"/>
    <lineage>
        <taxon>Archaea</taxon>
        <taxon>Nanobdellota</taxon>
        <taxon>Candidatus Nanoarchaeia</taxon>
        <taxon>Nanoarchaeales</taxon>
        <taxon>Nanoarchaeaceae</taxon>
        <taxon>Nanoarchaeum</taxon>
    </lineage>
</organism>